<dbReference type="EMBL" id="AK012212">
    <property type="protein sequence ID" value="BAB28100.1"/>
    <property type="molecule type" value="mRNA"/>
</dbReference>
<dbReference type="EMBL" id="AK040971">
    <property type="protein sequence ID" value="BAC30765.1"/>
    <property type="molecule type" value="mRNA"/>
</dbReference>
<dbReference type="EMBL" id="AL606925">
    <property type="status" value="NOT_ANNOTATED_CDS"/>
    <property type="molecule type" value="Genomic_DNA"/>
</dbReference>
<dbReference type="CCDS" id="CCDS38889.1">
    <molecule id="Q8BLX7-1"/>
</dbReference>
<dbReference type="RefSeq" id="NP_082542.3">
    <molecule id="Q8BLX7-1"/>
    <property type="nucleotide sequence ID" value="NM_028266.5"/>
</dbReference>
<dbReference type="BioGRID" id="223412">
    <property type="interactions" value="3"/>
</dbReference>
<dbReference type="ComplexPortal" id="CPX-2994">
    <property type="entry name" value="Collagen type XVI trimer"/>
</dbReference>
<dbReference type="FunCoup" id="Q8BLX7">
    <property type="interactions" value="156"/>
</dbReference>
<dbReference type="STRING" id="10090.ENSMUSP00000035802"/>
<dbReference type="GlyCosmos" id="Q8BLX7">
    <property type="glycosylation" value="2 sites, No reported glycans"/>
</dbReference>
<dbReference type="GlyGen" id="Q8BLX7">
    <property type="glycosylation" value="5 sites, 1 N-linked glycan (1 site)"/>
</dbReference>
<dbReference type="iPTMnet" id="Q8BLX7"/>
<dbReference type="PhosphoSitePlus" id="Q8BLX7"/>
<dbReference type="SwissPalm" id="Q8BLX7"/>
<dbReference type="jPOST" id="Q8BLX7"/>
<dbReference type="PaxDb" id="10090-ENSMUSP00000035802"/>
<dbReference type="ProteomicsDB" id="283421">
    <molecule id="Q8BLX7-1"/>
</dbReference>
<dbReference type="ProteomicsDB" id="283422">
    <molecule id="Q8BLX7-2"/>
</dbReference>
<dbReference type="Pumba" id="Q8BLX7"/>
<dbReference type="Antibodypedia" id="8436">
    <property type="antibodies" value="68 antibodies from 20 providers"/>
</dbReference>
<dbReference type="DNASU" id="107581"/>
<dbReference type="Ensembl" id="ENSMUST00000044565.15">
    <molecule id="Q8BLX7-1"/>
    <property type="protein sequence ID" value="ENSMUSP00000035802.9"/>
    <property type="gene ID" value="ENSMUSG00000040690.16"/>
</dbReference>
<dbReference type="GeneID" id="107581"/>
<dbReference type="KEGG" id="mmu:107581"/>
<dbReference type="UCSC" id="uc008uyr.2">
    <molecule id="Q8BLX7-1"/>
    <property type="organism name" value="mouse"/>
</dbReference>
<dbReference type="UCSC" id="uc008uyv.2">
    <molecule id="Q8BLX7-2"/>
    <property type="organism name" value="mouse"/>
</dbReference>
<dbReference type="AGR" id="MGI:1095396"/>
<dbReference type="CTD" id="1307"/>
<dbReference type="MGI" id="MGI:1095396">
    <property type="gene designation" value="Col16a1"/>
</dbReference>
<dbReference type="VEuPathDB" id="HostDB:ENSMUSG00000040690"/>
<dbReference type="eggNOG" id="KOG3544">
    <property type="taxonomic scope" value="Eukaryota"/>
</dbReference>
<dbReference type="GeneTree" id="ENSGT00940000161782"/>
<dbReference type="HOGENOM" id="CLU_001074_2_2_1"/>
<dbReference type="InParanoid" id="Q8BLX7"/>
<dbReference type="OMA" id="MGNSWQP"/>
<dbReference type="OrthoDB" id="5983381at2759"/>
<dbReference type="PhylomeDB" id="Q8BLX7"/>
<dbReference type="TreeFam" id="TF332900"/>
<dbReference type="Reactome" id="R-MMU-1650814">
    <property type="pathway name" value="Collagen biosynthesis and modifying enzymes"/>
</dbReference>
<dbReference type="Reactome" id="R-MMU-216083">
    <property type="pathway name" value="Integrin cell surface interactions"/>
</dbReference>
<dbReference type="Reactome" id="R-MMU-8948216">
    <property type="pathway name" value="Collagen chain trimerization"/>
</dbReference>
<dbReference type="BioGRID-ORCS" id="107581">
    <property type="hits" value="1 hit in 76 CRISPR screens"/>
</dbReference>
<dbReference type="ChiTaRS" id="Col16a1">
    <property type="organism name" value="mouse"/>
</dbReference>
<dbReference type="PRO" id="PR:Q8BLX7"/>
<dbReference type="Proteomes" id="UP000000589">
    <property type="component" value="Chromosome 4"/>
</dbReference>
<dbReference type="RNAct" id="Q8BLX7">
    <property type="molecule type" value="protein"/>
</dbReference>
<dbReference type="Bgee" id="ENSMUSG00000040690">
    <property type="expression patterns" value="Expressed in humerus cartilage element and 249 other cell types or tissues"/>
</dbReference>
<dbReference type="ExpressionAtlas" id="Q8BLX7">
    <property type="expression patterns" value="baseline and differential"/>
</dbReference>
<dbReference type="GO" id="GO:0005581">
    <property type="term" value="C:collagen trimer"/>
    <property type="evidence" value="ECO:0007669"/>
    <property type="project" value="UniProtKB-KW"/>
</dbReference>
<dbReference type="GO" id="GO:0062023">
    <property type="term" value="C:collagen-containing extracellular matrix"/>
    <property type="evidence" value="ECO:0007005"/>
    <property type="project" value="BHF-UCL"/>
</dbReference>
<dbReference type="GO" id="GO:0005576">
    <property type="term" value="C:extracellular region"/>
    <property type="evidence" value="ECO:0007669"/>
    <property type="project" value="UniProtKB-KW"/>
</dbReference>
<dbReference type="GO" id="GO:0005178">
    <property type="term" value="F:integrin binding"/>
    <property type="evidence" value="ECO:0000250"/>
    <property type="project" value="UniProtKB"/>
</dbReference>
<dbReference type="GO" id="GO:0007155">
    <property type="term" value="P:cell adhesion"/>
    <property type="evidence" value="ECO:0000250"/>
    <property type="project" value="UniProtKB"/>
</dbReference>
<dbReference type="GO" id="GO:0033627">
    <property type="term" value="P:cell adhesion mediated by integrin"/>
    <property type="evidence" value="ECO:0007669"/>
    <property type="project" value="Ensembl"/>
</dbReference>
<dbReference type="GO" id="GO:0071230">
    <property type="term" value="P:cellular response to amino acid stimulus"/>
    <property type="evidence" value="ECO:0000314"/>
    <property type="project" value="MGI"/>
</dbReference>
<dbReference type="GO" id="GO:0033622">
    <property type="term" value="P:integrin activation"/>
    <property type="evidence" value="ECO:0007669"/>
    <property type="project" value="Ensembl"/>
</dbReference>
<dbReference type="GO" id="GO:0051894">
    <property type="term" value="P:positive regulation of focal adhesion assembly"/>
    <property type="evidence" value="ECO:0007669"/>
    <property type="project" value="Ensembl"/>
</dbReference>
<dbReference type="FunFam" id="2.60.120.200:FF:000094">
    <property type="entry name" value="Collagen type XVI alpha 1 chain"/>
    <property type="match status" value="1"/>
</dbReference>
<dbReference type="Gene3D" id="2.60.120.200">
    <property type="match status" value="1"/>
</dbReference>
<dbReference type="InterPro" id="IPR008160">
    <property type="entry name" value="Collagen"/>
</dbReference>
<dbReference type="InterPro" id="IPR050149">
    <property type="entry name" value="Collagen_superfamily"/>
</dbReference>
<dbReference type="InterPro" id="IPR013320">
    <property type="entry name" value="ConA-like_dom_sf"/>
</dbReference>
<dbReference type="InterPro" id="IPR048287">
    <property type="entry name" value="TSPN-like_N"/>
</dbReference>
<dbReference type="PANTHER" id="PTHR24023">
    <property type="entry name" value="COLLAGEN ALPHA"/>
    <property type="match status" value="1"/>
</dbReference>
<dbReference type="PANTHER" id="PTHR24023:SF1082">
    <property type="entry name" value="COLLAGEN TRIPLE HELIX REPEAT"/>
    <property type="match status" value="1"/>
</dbReference>
<dbReference type="Pfam" id="PF01391">
    <property type="entry name" value="Collagen"/>
    <property type="match status" value="6"/>
</dbReference>
<dbReference type="SMART" id="SM00210">
    <property type="entry name" value="TSPN"/>
    <property type="match status" value="1"/>
</dbReference>
<dbReference type="SUPFAM" id="SSF49899">
    <property type="entry name" value="Concanavalin A-like lectins/glucanases"/>
    <property type="match status" value="1"/>
</dbReference>
<keyword id="KW-0025">Alternative splicing</keyword>
<keyword id="KW-0130">Cell adhesion</keyword>
<keyword id="KW-0176">Collagen</keyword>
<keyword id="KW-0272">Extracellular matrix</keyword>
<keyword id="KW-0325">Glycoprotein</keyword>
<keyword id="KW-0379">Hydroxylation</keyword>
<keyword id="KW-1185">Reference proteome</keyword>
<keyword id="KW-0677">Repeat</keyword>
<keyword id="KW-0964">Secreted</keyword>
<keyword id="KW-0732">Signal</keyword>
<accession>Q8BLX7</accession>
<accession>A3KFV5</accession>
<accession>Q9CZS2</accession>
<feature type="signal peptide" evidence="3">
    <location>
        <begin position="1"/>
        <end position="21"/>
    </location>
</feature>
<feature type="chain" id="PRO_0000282960" description="Collagen alpha-1(XVI) chain" evidence="3">
    <location>
        <begin position="22"/>
        <end position="1580"/>
    </location>
</feature>
<feature type="domain" description="Laminin G-like">
    <location>
        <begin position="50"/>
        <end position="231"/>
    </location>
</feature>
<feature type="domain" description="Collagen-like 1">
    <location>
        <begin position="375"/>
        <end position="424"/>
    </location>
</feature>
<feature type="domain" description="Collagen-like 2">
    <location>
        <begin position="590"/>
        <end position="643"/>
    </location>
</feature>
<feature type="domain" description="Collagen-like 3">
    <location>
        <begin position="676"/>
        <end position="725"/>
    </location>
</feature>
<feature type="domain" description="Collagen-like 4">
    <location>
        <begin position="797"/>
        <end position="848"/>
    </location>
</feature>
<feature type="domain" description="Collagen-like 5">
    <location>
        <begin position="1006"/>
        <end position="1063"/>
    </location>
</feature>
<feature type="domain" description="Collagen-like 6">
    <location>
        <begin position="1210"/>
        <end position="1263"/>
    </location>
</feature>
<feature type="domain" description="Collagen-like 7">
    <location>
        <begin position="1350"/>
        <end position="1407"/>
    </location>
</feature>
<feature type="domain" description="Collagen-like 8">
    <location>
        <begin position="1448"/>
        <end position="1500"/>
    </location>
</feature>
<feature type="domain" description="Collagen-like 9">
    <location>
        <begin position="1504"/>
        <end position="1552"/>
    </location>
</feature>
<feature type="region of interest" description="Nonhelical region 10 (NC10)" evidence="3">
    <location>
        <begin position="232"/>
        <end position="374"/>
    </location>
</feature>
<feature type="region of interest" description="Disordered" evidence="4">
    <location>
        <begin position="324"/>
        <end position="547"/>
    </location>
</feature>
<feature type="region of interest" description="Triple-helical region 9 (COL9) with 3 imperfections" evidence="3">
    <location>
        <begin position="375"/>
        <end position="509"/>
    </location>
</feature>
<feature type="region of interest" description="Nonhelical region 9 (NC9)" evidence="3">
    <location>
        <begin position="510"/>
        <end position="524"/>
    </location>
</feature>
<feature type="region of interest" description="Triple-helical region 8 (COL8) with 1 imperfection" evidence="3">
    <location>
        <begin position="525"/>
        <end position="570"/>
    </location>
</feature>
<feature type="region of interest" description="Nonhelical region 8 (NC8)" evidence="3">
    <location>
        <begin position="571"/>
        <end position="586"/>
    </location>
</feature>
<feature type="region of interest" description="Disordered" evidence="4">
    <location>
        <begin position="585"/>
        <end position="935"/>
    </location>
</feature>
<feature type="region of interest" description="Triple-helical region 7 (COL7) with 1 imperfection" evidence="3">
    <location>
        <begin position="587"/>
        <end position="640"/>
    </location>
</feature>
<feature type="region of interest" description="Nonhelical region 7 (NC7)" evidence="3">
    <location>
        <begin position="641"/>
        <end position="661"/>
    </location>
</feature>
<feature type="region of interest" description="Triple-helical region 6 (COL6) with 1 imperfection" evidence="3">
    <location>
        <begin position="662"/>
        <end position="732"/>
    </location>
</feature>
<feature type="region of interest" description="Nonhelical region 6 (NC6)" evidence="3">
    <location>
        <begin position="733"/>
        <end position="747"/>
    </location>
</feature>
<feature type="region of interest" description="Triple-helical region 5 (COL5) with 3 imperfections" evidence="3">
    <location>
        <begin position="748"/>
        <end position="870"/>
    </location>
</feature>
<feature type="region of interest" description="Nonhelical region 5 (NC5)" evidence="3">
    <location>
        <begin position="871"/>
        <end position="881"/>
    </location>
</feature>
<feature type="region of interest" description="Triple-helical region 4 (COL4) with 2 imperfections" evidence="3">
    <location>
        <begin position="882"/>
        <end position="933"/>
    </location>
</feature>
<feature type="region of interest" description="Nonhelical region 4 (NC4)" evidence="3">
    <location>
        <begin position="934"/>
        <end position="967"/>
    </location>
</feature>
<feature type="region of interest" description="Triple-helical region 3 (COL3)" evidence="3">
    <location>
        <begin position="968"/>
        <end position="982"/>
    </location>
</feature>
<feature type="region of interest" description="Nonhelical region 3 (NC3)" evidence="3">
    <location>
        <begin position="983"/>
        <end position="1005"/>
    </location>
</feature>
<feature type="region of interest" description="Disordered" evidence="4">
    <location>
        <begin position="995"/>
        <end position="1405"/>
    </location>
</feature>
<feature type="region of interest" description="Triple-helical region 2 (COL2) with 2 imperfections" evidence="3">
    <location>
        <begin position="1006"/>
        <end position="1409"/>
    </location>
</feature>
<feature type="region of interest" description="Nonhelical region 2 (NC2)" evidence="3">
    <location>
        <begin position="1410"/>
        <end position="1448"/>
    </location>
</feature>
<feature type="region of interest" description="Disordered" evidence="4">
    <location>
        <begin position="1445"/>
        <end position="1523"/>
    </location>
</feature>
<feature type="region of interest" description="Triple-helical region 1 (COL1) with 2 imperfections" evidence="3">
    <location>
        <begin position="1449"/>
        <end position="1554"/>
    </location>
</feature>
<feature type="region of interest" description="Nonhelical region 1 (NC1)" evidence="3">
    <location>
        <begin position="1555"/>
        <end position="1580"/>
    </location>
</feature>
<feature type="short sequence motif" description="Cell attachment site" evidence="3">
    <location>
        <begin position="555"/>
        <end position="557"/>
    </location>
</feature>
<feature type="short sequence motif" description="Cell attachment site" evidence="3">
    <location>
        <begin position="1000"/>
        <end position="1002"/>
    </location>
</feature>
<feature type="short sequence motif" description="Cell attachment site" evidence="3">
    <location>
        <begin position="1206"/>
        <end position="1208"/>
    </location>
</feature>
<feature type="compositionally biased region" description="Pro residues" evidence="4">
    <location>
        <begin position="449"/>
        <end position="460"/>
    </location>
</feature>
<feature type="compositionally biased region" description="Gly residues" evidence="4">
    <location>
        <begin position="486"/>
        <end position="495"/>
    </location>
</feature>
<feature type="compositionally biased region" description="Low complexity" evidence="4">
    <location>
        <begin position="585"/>
        <end position="598"/>
    </location>
</feature>
<feature type="compositionally biased region" description="Basic and acidic residues" evidence="4">
    <location>
        <begin position="683"/>
        <end position="693"/>
    </location>
</feature>
<feature type="compositionally biased region" description="Low complexity" evidence="4">
    <location>
        <begin position="698"/>
        <end position="714"/>
    </location>
</feature>
<feature type="compositionally biased region" description="Low complexity" evidence="4">
    <location>
        <begin position="801"/>
        <end position="817"/>
    </location>
</feature>
<feature type="compositionally biased region" description="Pro residues" evidence="4">
    <location>
        <begin position="899"/>
        <end position="914"/>
    </location>
</feature>
<feature type="compositionally biased region" description="Low complexity" evidence="4">
    <location>
        <begin position="1098"/>
        <end position="1107"/>
    </location>
</feature>
<feature type="compositionally biased region" description="Pro residues" evidence="4">
    <location>
        <begin position="1139"/>
        <end position="1148"/>
    </location>
</feature>
<feature type="compositionally biased region" description="Pro residues" evidence="4">
    <location>
        <begin position="1178"/>
        <end position="1187"/>
    </location>
</feature>
<feature type="compositionally biased region" description="Basic and acidic residues" evidence="4">
    <location>
        <begin position="1196"/>
        <end position="1205"/>
    </location>
</feature>
<feature type="compositionally biased region" description="Low complexity" evidence="4">
    <location>
        <begin position="1247"/>
        <end position="1263"/>
    </location>
</feature>
<feature type="compositionally biased region" description="Pro residues" evidence="4">
    <location>
        <begin position="1265"/>
        <end position="1281"/>
    </location>
</feature>
<feature type="compositionally biased region" description="Gly residues" evidence="4">
    <location>
        <begin position="1362"/>
        <end position="1371"/>
    </location>
</feature>
<feature type="compositionally biased region" description="Low complexity" evidence="4">
    <location>
        <begin position="1396"/>
        <end position="1405"/>
    </location>
</feature>
<feature type="glycosylation site" description="N-linked (GlcNAc...) asparagine" evidence="3">
    <location>
        <position position="47"/>
    </location>
</feature>
<feature type="glycosylation site" description="N-linked (GlcNAc...) asparagine" evidence="3">
    <location>
        <position position="327"/>
    </location>
</feature>
<feature type="splice variant" id="VSP_052375" description="In isoform 2." evidence="7">
    <location>
        <begin position="1"/>
        <end position="1430"/>
    </location>
</feature>
<feature type="sequence conflict" description="In Ref. 1; BAC30765." evidence="8" ref="1">
    <original>K</original>
    <variation>R</variation>
    <location>
        <position position="726"/>
    </location>
</feature>
<feature type="sequence conflict" description="In Ref. 1; BAC30765." evidence="8" ref="1">
    <original>R</original>
    <variation>Q</variation>
    <location>
        <position position="1119"/>
    </location>
</feature>
<name>COGA1_MOUSE</name>
<reference evidence="8 10" key="1">
    <citation type="journal article" date="2005" name="Science">
        <title>The transcriptional landscape of the mammalian genome.</title>
        <authorList>
            <person name="Carninci P."/>
            <person name="Kasukawa T."/>
            <person name="Katayama S."/>
            <person name="Gough J."/>
            <person name="Frith M.C."/>
            <person name="Maeda N."/>
            <person name="Oyama R."/>
            <person name="Ravasi T."/>
            <person name="Lenhard B."/>
            <person name="Wells C."/>
            <person name="Kodzius R."/>
            <person name="Shimokawa K."/>
            <person name="Bajic V.B."/>
            <person name="Brenner S.E."/>
            <person name="Batalov S."/>
            <person name="Forrest A.R."/>
            <person name="Zavolan M."/>
            <person name="Davis M.J."/>
            <person name="Wilming L.G."/>
            <person name="Aidinis V."/>
            <person name="Allen J.E."/>
            <person name="Ambesi-Impiombato A."/>
            <person name="Apweiler R."/>
            <person name="Aturaliya R.N."/>
            <person name="Bailey T.L."/>
            <person name="Bansal M."/>
            <person name="Baxter L."/>
            <person name="Beisel K.W."/>
            <person name="Bersano T."/>
            <person name="Bono H."/>
            <person name="Chalk A.M."/>
            <person name="Chiu K.P."/>
            <person name="Choudhary V."/>
            <person name="Christoffels A."/>
            <person name="Clutterbuck D.R."/>
            <person name="Crowe M.L."/>
            <person name="Dalla E."/>
            <person name="Dalrymple B.P."/>
            <person name="de Bono B."/>
            <person name="Della Gatta G."/>
            <person name="di Bernardo D."/>
            <person name="Down T."/>
            <person name="Engstrom P."/>
            <person name="Fagiolini M."/>
            <person name="Faulkner G."/>
            <person name="Fletcher C.F."/>
            <person name="Fukushima T."/>
            <person name="Furuno M."/>
            <person name="Futaki S."/>
            <person name="Gariboldi M."/>
            <person name="Georgii-Hemming P."/>
            <person name="Gingeras T.R."/>
            <person name="Gojobori T."/>
            <person name="Green R.E."/>
            <person name="Gustincich S."/>
            <person name="Harbers M."/>
            <person name="Hayashi Y."/>
            <person name="Hensch T.K."/>
            <person name="Hirokawa N."/>
            <person name="Hill D."/>
            <person name="Huminiecki L."/>
            <person name="Iacono M."/>
            <person name="Ikeo K."/>
            <person name="Iwama A."/>
            <person name="Ishikawa T."/>
            <person name="Jakt M."/>
            <person name="Kanapin A."/>
            <person name="Katoh M."/>
            <person name="Kawasawa Y."/>
            <person name="Kelso J."/>
            <person name="Kitamura H."/>
            <person name="Kitano H."/>
            <person name="Kollias G."/>
            <person name="Krishnan S.P."/>
            <person name="Kruger A."/>
            <person name="Kummerfeld S.K."/>
            <person name="Kurochkin I.V."/>
            <person name="Lareau L.F."/>
            <person name="Lazarevic D."/>
            <person name="Lipovich L."/>
            <person name="Liu J."/>
            <person name="Liuni S."/>
            <person name="McWilliam S."/>
            <person name="Madan Babu M."/>
            <person name="Madera M."/>
            <person name="Marchionni L."/>
            <person name="Matsuda H."/>
            <person name="Matsuzawa S."/>
            <person name="Miki H."/>
            <person name="Mignone F."/>
            <person name="Miyake S."/>
            <person name="Morris K."/>
            <person name="Mottagui-Tabar S."/>
            <person name="Mulder N."/>
            <person name="Nakano N."/>
            <person name="Nakauchi H."/>
            <person name="Ng P."/>
            <person name="Nilsson R."/>
            <person name="Nishiguchi S."/>
            <person name="Nishikawa S."/>
            <person name="Nori F."/>
            <person name="Ohara O."/>
            <person name="Okazaki Y."/>
            <person name="Orlando V."/>
            <person name="Pang K.C."/>
            <person name="Pavan W.J."/>
            <person name="Pavesi G."/>
            <person name="Pesole G."/>
            <person name="Petrovsky N."/>
            <person name="Piazza S."/>
            <person name="Reed J."/>
            <person name="Reid J.F."/>
            <person name="Ring B.Z."/>
            <person name="Ringwald M."/>
            <person name="Rost B."/>
            <person name="Ruan Y."/>
            <person name="Salzberg S.L."/>
            <person name="Sandelin A."/>
            <person name="Schneider C."/>
            <person name="Schoenbach C."/>
            <person name="Sekiguchi K."/>
            <person name="Semple C.A."/>
            <person name="Seno S."/>
            <person name="Sessa L."/>
            <person name="Sheng Y."/>
            <person name="Shibata Y."/>
            <person name="Shimada H."/>
            <person name="Shimada K."/>
            <person name="Silva D."/>
            <person name="Sinclair B."/>
            <person name="Sperling S."/>
            <person name="Stupka E."/>
            <person name="Sugiura K."/>
            <person name="Sultana R."/>
            <person name="Takenaka Y."/>
            <person name="Taki K."/>
            <person name="Tammoja K."/>
            <person name="Tan S.L."/>
            <person name="Tang S."/>
            <person name="Taylor M.S."/>
            <person name="Tegner J."/>
            <person name="Teichmann S.A."/>
            <person name="Ueda H.R."/>
            <person name="van Nimwegen E."/>
            <person name="Verardo R."/>
            <person name="Wei C.L."/>
            <person name="Yagi K."/>
            <person name="Yamanishi H."/>
            <person name="Zabarovsky E."/>
            <person name="Zhu S."/>
            <person name="Zimmer A."/>
            <person name="Hide W."/>
            <person name="Bult C."/>
            <person name="Grimmond S.M."/>
            <person name="Teasdale R.D."/>
            <person name="Liu E.T."/>
            <person name="Brusic V."/>
            <person name="Quackenbush J."/>
            <person name="Wahlestedt C."/>
            <person name="Mattick J.S."/>
            <person name="Hume D.A."/>
            <person name="Kai C."/>
            <person name="Sasaki D."/>
            <person name="Tomaru Y."/>
            <person name="Fukuda S."/>
            <person name="Kanamori-Katayama M."/>
            <person name="Suzuki M."/>
            <person name="Aoki J."/>
            <person name="Arakawa T."/>
            <person name="Iida J."/>
            <person name="Imamura K."/>
            <person name="Itoh M."/>
            <person name="Kato T."/>
            <person name="Kawaji H."/>
            <person name="Kawagashira N."/>
            <person name="Kawashima T."/>
            <person name="Kojima M."/>
            <person name="Kondo S."/>
            <person name="Konno H."/>
            <person name="Nakano K."/>
            <person name="Ninomiya N."/>
            <person name="Nishio T."/>
            <person name="Okada M."/>
            <person name="Plessy C."/>
            <person name="Shibata K."/>
            <person name="Shiraki T."/>
            <person name="Suzuki S."/>
            <person name="Tagami M."/>
            <person name="Waki K."/>
            <person name="Watahiki A."/>
            <person name="Okamura-Oho Y."/>
            <person name="Suzuki H."/>
            <person name="Kawai J."/>
            <person name="Hayashizaki Y."/>
        </authorList>
    </citation>
    <scope>NUCLEOTIDE SEQUENCE [LARGE SCALE MRNA] (ISOFORMS 1 AND 2)</scope>
    <source>
        <strain evidence="10">C57BL/6J</strain>
        <tissue evidence="9">Embryo</tissue>
    </source>
</reference>
<reference key="2">
    <citation type="journal article" date="2009" name="PLoS Biol.">
        <title>Lineage-specific biology revealed by a finished genome assembly of the mouse.</title>
        <authorList>
            <person name="Church D.M."/>
            <person name="Goodstadt L."/>
            <person name="Hillier L.W."/>
            <person name="Zody M.C."/>
            <person name="Goldstein S."/>
            <person name="She X."/>
            <person name="Bult C.J."/>
            <person name="Agarwala R."/>
            <person name="Cherry J.L."/>
            <person name="DiCuccio M."/>
            <person name="Hlavina W."/>
            <person name="Kapustin Y."/>
            <person name="Meric P."/>
            <person name="Maglott D."/>
            <person name="Birtle Z."/>
            <person name="Marques A.C."/>
            <person name="Graves T."/>
            <person name="Zhou S."/>
            <person name="Teague B."/>
            <person name="Potamousis K."/>
            <person name="Churas C."/>
            <person name="Place M."/>
            <person name="Herschleb J."/>
            <person name="Runnheim R."/>
            <person name="Forrest D."/>
            <person name="Amos-Landgraf J."/>
            <person name="Schwartz D.C."/>
            <person name="Cheng Z."/>
            <person name="Lindblad-Toh K."/>
            <person name="Eichler E.E."/>
            <person name="Ponting C.P."/>
        </authorList>
    </citation>
    <scope>NUCLEOTIDE SEQUENCE [LARGE SCALE GENOMIC DNA]</scope>
</reference>
<reference evidence="8" key="3">
    <citation type="journal article" date="1996" name="Tissue Cell">
        <title>Tissue distribution and developmental expression of type XVI collagen in the mouse.</title>
        <authorList>
            <person name="Lai C.-H."/>
            <person name="Chu M.-L."/>
        </authorList>
    </citation>
    <scope>TISSUE SPECIFICITY</scope>
    <scope>DEVELOPMENTAL STAGE</scope>
</reference>
<reference key="4">
    <citation type="journal article" date="2010" name="Cell">
        <title>A tissue-specific atlas of mouse protein phosphorylation and expression.</title>
        <authorList>
            <person name="Huttlin E.L."/>
            <person name="Jedrychowski M.P."/>
            <person name="Elias J.E."/>
            <person name="Goswami T."/>
            <person name="Rad R."/>
            <person name="Beausoleil S.A."/>
            <person name="Villen J."/>
            <person name="Haas W."/>
            <person name="Sowa M.E."/>
            <person name="Gygi S.P."/>
        </authorList>
    </citation>
    <scope>IDENTIFICATION BY MASS SPECTROMETRY [LARGE SCALE ANALYSIS]</scope>
    <source>
        <tissue>Testis</tissue>
    </source>
</reference>
<comment type="function">
    <text evidence="2">Involved in mediating cell attachment and inducing integrin-mediated cellular reactions, such as cell spreading and alterations in cell morphology.</text>
</comment>
<comment type="subunit">
    <text evidence="2">Homotrimer. Interacts with FBN1, fibronectin and integrins ITGA1/ITGB1 and ITGA2/ITGB1. Integrin ITGA1/ITGB1 binds to a unique site within COL16A1 located close to its C-terminal end between collagenous domains COL1-COL3 (By similarity).</text>
</comment>
<comment type="subcellular location">
    <subcellularLocation>
        <location evidence="1">Secreted</location>
        <location evidence="1">Extracellular space</location>
        <location evidence="1">Extracellular matrix</location>
    </subcellularLocation>
</comment>
<comment type="alternative products">
    <event type="alternative splicing"/>
    <isoform>
        <id>Q8BLX7-1</id>
        <name evidence="5">1</name>
        <sequence type="displayed"/>
    </isoform>
    <isoform>
        <id>Q8BLX7-2</id>
        <name evidence="5">2</name>
        <sequence type="described" ref="VSP_052375"/>
    </isoform>
</comment>
<comment type="tissue specificity">
    <text evidence="6">Expressed in most tissues examined with highest levels of expression observed in heart. Strongly expressed in cortical and medullar regions of kidney and more weakly expressed in lung. Also detected in the ciliary muscle of the eye, on the serosa layer lining the muscularis externa of intestinal tissue, and in the perimysium membrane lining both the cardiac muscle bundle and the smooth muscle tissue of the small intestine. Strongly stained in particulate or granular structures. Not detected in brain or skeletal muscle.</text>
</comment>
<comment type="developmental stage">
    <text evidence="6">At 8 dpc no significant expression of mRNA or protein is observed, but strong signals are observed in placental trophoblasts. By 11 dpc weak positive signals are observed in heart. During later stages of development, stronger expression is observed in a variety of tissues, particularly in the atrial and ventricular walls of the developing heart, spinal root neural fibers and skin.</text>
</comment>
<comment type="domain">
    <text evidence="3">This sequence defines eighteen different domains, nine triple-helical domains (COL9 to COL1) and ten non-triple-helical domains (NC10 to NC1). The numerous interruptions in the triple helix may make this molecule either elastic or flexible.</text>
</comment>
<comment type="PTM">
    <text evidence="8">Prolines at the third position of the tripeptide repeating unit (G-X-Y) are hydroxylated in some or all of the chains.</text>
</comment>
<comment type="PTM">
    <text evidence="2">Glycosylated.</text>
</comment>
<comment type="similarity">
    <text evidence="3">Belongs to the fibril-associated collagens with interrupted helices (FACIT) family.</text>
</comment>
<gene>
    <name evidence="11" type="primary">Col16a1</name>
</gene>
<sequence>MLTSWAPGLWVLGLWATFSHGTNIGERCPTSQQEGLKLEHSSDPSTNVTGFNLIRRLNLMKTSAIKKIRNPKGPLILRLGAAPVTQPTRRVFPRGLPEEFALVLTVLLKKHTFRNTWYLFQVTDANGYPQISLEVNSQERSLELRAQGQDGDFVSCIFPVPQLFDLRWHKLMLSVAGRVASVHVDCVSASSQPLGPRQSIRPGGHVFLGLDAEQGKPVSFDLQQAHIYCDPELVLEEGCCEILPGGCPPETSKSRRDTQSNELIEINPQTEGKVYTRCFCLEEPQNSKVDAQLMGRNIQKAERGTKVHQGTGVNECPPCAHSARESNVTLGPSGLKGGKGERGLTGPSGPKGEKGARGNDCVRVSPDAPLQCVEGPKGEKGESGDLGPPGLPGPTGQKGQKGEKGDGGLKGLPGKPGRDGRPGEICVIGPKGQKGDPGFVGPEGLAGEPGPPGLPGPPGIGLPGTPGDPGGPPGPKGEKGSSGIPGKEGPGGKPGKPGVPGTKGEKGDPCEVCPTLPEGSQNFVGLPGKPGPKGEPGDPAPAWEGLGTVGLKGDRGDPGIQGMKGEKGEPCSSCSSGVGAQHLGPSPGHGLPGLPGTSGIPGPRGLKGEKGSFGDTGPAGVPGSPGPVGPAGIKGAKGEPCEPCTALSELQDGDMRVVHLPGPAGEKGEPGSPGFGLPGKQGKAGERGLKGQKGDAGNPGDPGTPGITGQPGISGEPGIRGPAGPKGEKGDGCTACPSLQGALTDVSGLPGKPGPKGEPGPEGVGHPGKPGQPGLPGVQGPPGPKGTQGEPGPPGTGAEGPQGEPGTQGLPGTQGLPGPRGPPGSAGEKGAQGSPGPKGAIGPMGPPGAGVSGPPGQKGSRGEKGEPGECSCPSRGEPIFSGMPGAPGLWMGSSSQPGPQGPPGVPGPPGPPGMPGLQGVPGHNGLPGQPGLTAELGSLPIEKHLLKSICGDCAQGQTAHPAFLLEKGEKGDQGIPGVPGFDNCARCFIERERPRAEEARGDNSEGEPGCSGSPGLPGPPGMPGQRGEEGPPGMRGSPGPPGPIGLQGERGLTGLTGDKGEPGPPGQPGYPGAMGPPGLPGIKGERGYTGPSGEKGESGPPGSEGLPGPQGPAGPRGERGPQGSSGEKGDQGFQGQPGFPGPPGPPGFPGKAGAPGPPGPQAEKGSEGIRGPSGLPGSPGPPGPPGIQGPAGLDGLDGKDGKPGLRGDPGPAGPPGLMGPPGFKGKTGHPGLPGPKGDCGKPGPPGSSGRPGAEGEPGAMGPQGRPGPPGHLGPPGQPGPPGLSTVGLKGDRGVPGERGLAGLPGQPGTPGHPGPPGEPGSDGAAGKEGPPGKQGLYGPPGPKGDPGPAGQKGQAGEKGRSGMPGGPGKSGSMGPIGPPGPAGERGHPGSPGPAGNPGLPGLPGSMGDMVNYDDIKRFIRQEIIKLFDERMAYYTSRMQFPMEVAAAPGRPGPPGKDGAPGRPGAPGSPGLPGQIGREGRQGLPGMRGLPGTKGEKGDIGVGIAGENGLPGPPGPQGPPGYGKMGATGPMGQQGIPGIPGPPGPMGQPGKAGHCNPSDCFGAMPMEQQYPPMKSMKGPFG</sequence>
<evidence type="ECO:0000250" key="1"/>
<evidence type="ECO:0000250" key="2">
    <source>
        <dbReference type="UniProtKB" id="Q07092"/>
    </source>
</evidence>
<evidence type="ECO:0000255" key="3"/>
<evidence type="ECO:0000256" key="4">
    <source>
        <dbReference type="SAM" id="MobiDB-lite"/>
    </source>
</evidence>
<evidence type="ECO:0000269" key="5">
    <source>
    </source>
</evidence>
<evidence type="ECO:0000269" key="6">
    <source>
    </source>
</evidence>
<evidence type="ECO:0000303" key="7">
    <source>
    </source>
</evidence>
<evidence type="ECO:0000305" key="8"/>
<evidence type="ECO:0000312" key="9">
    <source>
        <dbReference type="EMBL" id="BAB28100.1"/>
    </source>
</evidence>
<evidence type="ECO:0000312" key="10">
    <source>
        <dbReference type="EMBL" id="BAC30765.1"/>
    </source>
</evidence>
<evidence type="ECO:0000312" key="11">
    <source>
        <dbReference type="MGI" id="MGI:1095396"/>
    </source>
</evidence>
<proteinExistence type="evidence at protein level"/>
<protein>
    <recommendedName>
        <fullName>Collagen alpha-1(XVI) chain</fullName>
    </recommendedName>
</protein>
<organism>
    <name type="scientific">Mus musculus</name>
    <name type="common">Mouse</name>
    <dbReference type="NCBI Taxonomy" id="10090"/>
    <lineage>
        <taxon>Eukaryota</taxon>
        <taxon>Metazoa</taxon>
        <taxon>Chordata</taxon>
        <taxon>Craniata</taxon>
        <taxon>Vertebrata</taxon>
        <taxon>Euteleostomi</taxon>
        <taxon>Mammalia</taxon>
        <taxon>Eutheria</taxon>
        <taxon>Euarchontoglires</taxon>
        <taxon>Glires</taxon>
        <taxon>Rodentia</taxon>
        <taxon>Myomorpha</taxon>
        <taxon>Muroidea</taxon>
        <taxon>Muridae</taxon>
        <taxon>Murinae</taxon>
        <taxon>Mus</taxon>
        <taxon>Mus</taxon>
    </lineage>
</organism>